<evidence type="ECO:0000255" key="1">
    <source>
        <dbReference type="HAMAP-Rule" id="MF_01328"/>
    </source>
</evidence>
<evidence type="ECO:0000256" key="2">
    <source>
        <dbReference type="SAM" id="MobiDB-lite"/>
    </source>
</evidence>
<evidence type="ECO:0000305" key="3"/>
<accession>B7HQU5</accession>
<protein>
    <recommendedName>
        <fullName evidence="1">Large ribosomal subunit protein uL4</fullName>
    </recommendedName>
    <alternativeName>
        <fullName evidence="3">50S ribosomal protein L4</fullName>
    </alternativeName>
</protein>
<gene>
    <name evidence="1" type="primary">rplD</name>
    <name type="ordered locus">BCAH187_A0142</name>
</gene>
<keyword id="KW-0687">Ribonucleoprotein</keyword>
<keyword id="KW-0689">Ribosomal protein</keyword>
<keyword id="KW-0694">RNA-binding</keyword>
<keyword id="KW-0699">rRNA-binding</keyword>
<name>RL4_BACC7</name>
<sequence>MPKVTVYNQTGSQVGEIELAEAIFGIEPNEAVLFEAVMMQRASLRQGTHKVKTRSEVRGGGRKPWRQKGTGRARQGSIRSPQWRGGGTVFGPTPRSYAYKLPKKVRRLAIKSALATKVVENNIVVLEDLVLNAPKTKDMLAVLKGLTVEKKALIVTADANESVELSARNIPGVTVITADGVNVLDVLHHDKLIMTKAAVEKVEEVLA</sequence>
<feature type="chain" id="PRO_1000142080" description="Large ribosomal subunit protein uL4">
    <location>
        <begin position="1"/>
        <end position="207"/>
    </location>
</feature>
<feature type="region of interest" description="Disordered" evidence="2">
    <location>
        <begin position="45"/>
        <end position="89"/>
    </location>
</feature>
<feature type="compositionally biased region" description="Basic residues" evidence="2">
    <location>
        <begin position="60"/>
        <end position="71"/>
    </location>
</feature>
<reference key="1">
    <citation type="submission" date="2008-10" db="EMBL/GenBank/DDBJ databases">
        <title>Genome sequence of Bacillus cereus AH187.</title>
        <authorList>
            <person name="Dodson R.J."/>
            <person name="Durkin A.S."/>
            <person name="Rosovitz M.J."/>
            <person name="Rasko D.A."/>
            <person name="Kolsto A.B."/>
            <person name="Okstad O.A."/>
            <person name="Ravel J."/>
            <person name="Sutton G."/>
        </authorList>
    </citation>
    <scope>NUCLEOTIDE SEQUENCE [LARGE SCALE GENOMIC DNA]</scope>
    <source>
        <strain>AH187</strain>
    </source>
</reference>
<dbReference type="EMBL" id="CP001177">
    <property type="protein sequence ID" value="ACJ77189.1"/>
    <property type="molecule type" value="Genomic_DNA"/>
</dbReference>
<dbReference type="SMR" id="B7HQU5"/>
<dbReference type="KEGG" id="bcr:BCAH187_A0142"/>
<dbReference type="HOGENOM" id="CLU_041575_5_2_9"/>
<dbReference type="Proteomes" id="UP000002214">
    <property type="component" value="Chromosome"/>
</dbReference>
<dbReference type="GO" id="GO:1990904">
    <property type="term" value="C:ribonucleoprotein complex"/>
    <property type="evidence" value="ECO:0007669"/>
    <property type="project" value="UniProtKB-KW"/>
</dbReference>
<dbReference type="GO" id="GO:0005840">
    <property type="term" value="C:ribosome"/>
    <property type="evidence" value="ECO:0007669"/>
    <property type="project" value="UniProtKB-KW"/>
</dbReference>
<dbReference type="GO" id="GO:0019843">
    <property type="term" value="F:rRNA binding"/>
    <property type="evidence" value="ECO:0007669"/>
    <property type="project" value="UniProtKB-UniRule"/>
</dbReference>
<dbReference type="GO" id="GO:0003735">
    <property type="term" value="F:structural constituent of ribosome"/>
    <property type="evidence" value="ECO:0007669"/>
    <property type="project" value="InterPro"/>
</dbReference>
<dbReference type="GO" id="GO:0006412">
    <property type="term" value="P:translation"/>
    <property type="evidence" value="ECO:0007669"/>
    <property type="project" value="UniProtKB-UniRule"/>
</dbReference>
<dbReference type="FunFam" id="3.40.1370.10:FF:000003">
    <property type="entry name" value="50S ribosomal protein L4"/>
    <property type="match status" value="1"/>
</dbReference>
<dbReference type="Gene3D" id="3.40.1370.10">
    <property type="match status" value="1"/>
</dbReference>
<dbReference type="HAMAP" id="MF_01328_B">
    <property type="entry name" value="Ribosomal_uL4_B"/>
    <property type="match status" value="1"/>
</dbReference>
<dbReference type="InterPro" id="IPR002136">
    <property type="entry name" value="Ribosomal_uL4"/>
</dbReference>
<dbReference type="InterPro" id="IPR013005">
    <property type="entry name" value="Ribosomal_uL4-like"/>
</dbReference>
<dbReference type="InterPro" id="IPR023574">
    <property type="entry name" value="Ribosomal_uL4_dom_sf"/>
</dbReference>
<dbReference type="NCBIfam" id="TIGR03953">
    <property type="entry name" value="rplD_bact"/>
    <property type="match status" value="1"/>
</dbReference>
<dbReference type="PANTHER" id="PTHR10746">
    <property type="entry name" value="50S RIBOSOMAL PROTEIN L4"/>
    <property type="match status" value="1"/>
</dbReference>
<dbReference type="PANTHER" id="PTHR10746:SF6">
    <property type="entry name" value="LARGE RIBOSOMAL SUBUNIT PROTEIN UL4M"/>
    <property type="match status" value="1"/>
</dbReference>
<dbReference type="Pfam" id="PF00573">
    <property type="entry name" value="Ribosomal_L4"/>
    <property type="match status" value="1"/>
</dbReference>
<dbReference type="SUPFAM" id="SSF52166">
    <property type="entry name" value="Ribosomal protein L4"/>
    <property type="match status" value="1"/>
</dbReference>
<comment type="function">
    <text evidence="1">One of the primary rRNA binding proteins, this protein initially binds near the 5'-end of the 23S rRNA. It is important during the early stages of 50S assembly. It makes multiple contacts with different domains of the 23S rRNA in the assembled 50S subunit and ribosome.</text>
</comment>
<comment type="function">
    <text evidence="1">Forms part of the polypeptide exit tunnel.</text>
</comment>
<comment type="subunit">
    <text evidence="1">Part of the 50S ribosomal subunit.</text>
</comment>
<comment type="similarity">
    <text evidence="1">Belongs to the universal ribosomal protein uL4 family.</text>
</comment>
<proteinExistence type="inferred from homology"/>
<organism>
    <name type="scientific">Bacillus cereus (strain AH187)</name>
    <dbReference type="NCBI Taxonomy" id="405534"/>
    <lineage>
        <taxon>Bacteria</taxon>
        <taxon>Bacillati</taxon>
        <taxon>Bacillota</taxon>
        <taxon>Bacilli</taxon>
        <taxon>Bacillales</taxon>
        <taxon>Bacillaceae</taxon>
        <taxon>Bacillus</taxon>
        <taxon>Bacillus cereus group</taxon>
    </lineage>
</organism>